<reference key="1">
    <citation type="journal article" date="2008" name="BMC Genomics">
        <title>Genomics of an extreme psychrophile, Psychromonas ingrahamii.</title>
        <authorList>
            <person name="Riley M."/>
            <person name="Staley J.T."/>
            <person name="Danchin A."/>
            <person name="Wang T.Z."/>
            <person name="Brettin T.S."/>
            <person name="Hauser L.J."/>
            <person name="Land M.L."/>
            <person name="Thompson L.S."/>
        </authorList>
    </citation>
    <scope>NUCLEOTIDE SEQUENCE [LARGE SCALE GENOMIC DNA]</scope>
    <source>
        <strain>DSM 17664 / CCUG 51855 / 37</strain>
    </source>
</reference>
<gene>
    <name evidence="1" type="primary">rlmH</name>
    <name type="ordered locus">Ping_1136</name>
</gene>
<feature type="chain" id="PRO_1000061829" description="Ribosomal RNA large subunit methyltransferase H">
    <location>
        <begin position="1"/>
        <end position="156"/>
    </location>
</feature>
<feature type="binding site" evidence="1">
    <location>
        <position position="73"/>
    </location>
    <ligand>
        <name>S-adenosyl-L-methionine</name>
        <dbReference type="ChEBI" id="CHEBI:59789"/>
    </ligand>
</feature>
<feature type="binding site" evidence="1">
    <location>
        <position position="104"/>
    </location>
    <ligand>
        <name>S-adenosyl-L-methionine</name>
        <dbReference type="ChEBI" id="CHEBI:59789"/>
    </ligand>
</feature>
<feature type="binding site" evidence="1">
    <location>
        <begin position="123"/>
        <end position="128"/>
    </location>
    <ligand>
        <name>S-adenosyl-L-methionine</name>
        <dbReference type="ChEBI" id="CHEBI:59789"/>
    </ligand>
</feature>
<protein>
    <recommendedName>
        <fullName evidence="1">Ribosomal RNA large subunit methyltransferase H</fullName>
        <ecNumber evidence="1">2.1.1.177</ecNumber>
    </recommendedName>
    <alternativeName>
        <fullName evidence="1">23S rRNA (pseudouridine1915-N3)-methyltransferase</fullName>
    </alternativeName>
    <alternativeName>
        <fullName evidence="1">23S rRNA m3Psi1915 methyltransferase</fullName>
    </alternativeName>
    <alternativeName>
        <fullName evidence="1">rRNA (pseudouridine-N3-)-methyltransferase RlmH</fullName>
    </alternativeName>
</protein>
<comment type="function">
    <text evidence="1">Specifically methylates the pseudouridine at position 1915 (m3Psi1915) in 23S rRNA.</text>
</comment>
<comment type="catalytic activity">
    <reaction evidence="1">
        <text>pseudouridine(1915) in 23S rRNA + S-adenosyl-L-methionine = N(3)-methylpseudouridine(1915) in 23S rRNA + S-adenosyl-L-homocysteine + H(+)</text>
        <dbReference type="Rhea" id="RHEA:42752"/>
        <dbReference type="Rhea" id="RHEA-COMP:10221"/>
        <dbReference type="Rhea" id="RHEA-COMP:10222"/>
        <dbReference type="ChEBI" id="CHEBI:15378"/>
        <dbReference type="ChEBI" id="CHEBI:57856"/>
        <dbReference type="ChEBI" id="CHEBI:59789"/>
        <dbReference type="ChEBI" id="CHEBI:65314"/>
        <dbReference type="ChEBI" id="CHEBI:74486"/>
        <dbReference type="EC" id="2.1.1.177"/>
    </reaction>
</comment>
<comment type="subunit">
    <text evidence="1">Homodimer.</text>
</comment>
<comment type="subcellular location">
    <subcellularLocation>
        <location evidence="1">Cytoplasm</location>
    </subcellularLocation>
</comment>
<comment type="similarity">
    <text evidence="1">Belongs to the RNA methyltransferase RlmH family.</text>
</comment>
<dbReference type="EC" id="2.1.1.177" evidence="1"/>
<dbReference type="EMBL" id="CP000510">
    <property type="protein sequence ID" value="ABM02973.1"/>
    <property type="molecule type" value="Genomic_DNA"/>
</dbReference>
<dbReference type="RefSeq" id="WP_011769536.1">
    <property type="nucleotide sequence ID" value="NC_008709.1"/>
</dbReference>
<dbReference type="SMR" id="A1SU08"/>
<dbReference type="STRING" id="357804.Ping_1136"/>
<dbReference type="KEGG" id="pin:Ping_1136"/>
<dbReference type="eggNOG" id="COG1576">
    <property type="taxonomic scope" value="Bacteria"/>
</dbReference>
<dbReference type="HOGENOM" id="CLU_100552_1_0_6"/>
<dbReference type="OrthoDB" id="9806643at2"/>
<dbReference type="Proteomes" id="UP000000639">
    <property type="component" value="Chromosome"/>
</dbReference>
<dbReference type="GO" id="GO:0005737">
    <property type="term" value="C:cytoplasm"/>
    <property type="evidence" value="ECO:0007669"/>
    <property type="project" value="UniProtKB-SubCell"/>
</dbReference>
<dbReference type="GO" id="GO:0070038">
    <property type="term" value="F:rRNA (pseudouridine-N3-)-methyltransferase activity"/>
    <property type="evidence" value="ECO:0007669"/>
    <property type="project" value="UniProtKB-UniRule"/>
</dbReference>
<dbReference type="CDD" id="cd18081">
    <property type="entry name" value="RlmH-like"/>
    <property type="match status" value="1"/>
</dbReference>
<dbReference type="Gene3D" id="3.40.1280.10">
    <property type="match status" value="1"/>
</dbReference>
<dbReference type="HAMAP" id="MF_00658">
    <property type="entry name" value="23SrRNA_methyltr_H"/>
    <property type="match status" value="1"/>
</dbReference>
<dbReference type="InterPro" id="IPR029028">
    <property type="entry name" value="Alpha/beta_knot_MTases"/>
</dbReference>
<dbReference type="InterPro" id="IPR003742">
    <property type="entry name" value="RlmH-like"/>
</dbReference>
<dbReference type="InterPro" id="IPR029026">
    <property type="entry name" value="tRNA_m1G_MTases_N"/>
</dbReference>
<dbReference type="NCBIfam" id="NF000984">
    <property type="entry name" value="PRK00103.1-1"/>
    <property type="match status" value="1"/>
</dbReference>
<dbReference type="NCBIfam" id="NF000986">
    <property type="entry name" value="PRK00103.1-4"/>
    <property type="match status" value="1"/>
</dbReference>
<dbReference type="NCBIfam" id="TIGR00246">
    <property type="entry name" value="tRNA_RlmH_YbeA"/>
    <property type="match status" value="1"/>
</dbReference>
<dbReference type="PANTHER" id="PTHR33603">
    <property type="entry name" value="METHYLTRANSFERASE"/>
    <property type="match status" value="1"/>
</dbReference>
<dbReference type="PANTHER" id="PTHR33603:SF1">
    <property type="entry name" value="RIBOSOMAL RNA LARGE SUBUNIT METHYLTRANSFERASE H"/>
    <property type="match status" value="1"/>
</dbReference>
<dbReference type="Pfam" id="PF02590">
    <property type="entry name" value="SPOUT_MTase"/>
    <property type="match status" value="1"/>
</dbReference>
<dbReference type="PIRSF" id="PIRSF004505">
    <property type="entry name" value="MT_bac"/>
    <property type="match status" value="1"/>
</dbReference>
<dbReference type="SUPFAM" id="SSF75217">
    <property type="entry name" value="alpha/beta knot"/>
    <property type="match status" value="1"/>
</dbReference>
<name>RLMH_PSYIN</name>
<accession>A1SU08</accession>
<evidence type="ECO:0000255" key="1">
    <source>
        <dbReference type="HAMAP-Rule" id="MF_00658"/>
    </source>
</evidence>
<keyword id="KW-0963">Cytoplasm</keyword>
<keyword id="KW-0489">Methyltransferase</keyword>
<keyword id="KW-1185">Reference proteome</keyword>
<keyword id="KW-0698">rRNA processing</keyword>
<keyword id="KW-0949">S-adenosyl-L-methionine</keyword>
<keyword id="KW-0808">Transferase</keyword>
<sequence>MKIQLIAVGTKMPDWVEKGYQEYARRFPKEMQLELLEINAGKRGKNADIKRILKKEGELTLAAIPKGNKIVTLEVTGQAWTTEQLADEMGKWQLDARNISLLIGGPEGLAPECITKSEQRWSLSALTLPHPLVRVIVAESLYRAFTLTINHPYHRE</sequence>
<organism>
    <name type="scientific">Psychromonas ingrahamii (strain DSM 17664 / CCUG 51855 / 37)</name>
    <dbReference type="NCBI Taxonomy" id="357804"/>
    <lineage>
        <taxon>Bacteria</taxon>
        <taxon>Pseudomonadati</taxon>
        <taxon>Pseudomonadota</taxon>
        <taxon>Gammaproteobacteria</taxon>
        <taxon>Alteromonadales</taxon>
        <taxon>Psychromonadaceae</taxon>
        <taxon>Psychromonas</taxon>
    </lineage>
</organism>
<proteinExistence type="inferred from homology"/>